<comment type="function">
    <text evidence="1">Could be a nuclease involved in processing of the 5'-end of pre-16S rRNA.</text>
</comment>
<comment type="subcellular location">
    <subcellularLocation>
        <location evidence="1">Cytoplasm</location>
    </subcellularLocation>
</comment>
<comment type="similarity">
    <text evidence="1">Belongs to the YqgF nuclease family.</text>
</comment>
<keyword id="KW-0963">Cytoplasm</keyword>
<keyword id="KW-0378">Hydrolase</keyword>
<keyword id="KW-0540">Nuclease</keyword>
<keyword id="KW-1185">Reference proteome</keyword>
<keyword id="KW-0690">Ribosome biogenesis</keyword>
<accession>Q24UT5</accession>
<gene>
    <name type="ordered locus">DSY2418</name>
</gene>
<feature type="chain" id="PRO_0000257529" description="Putative pre-16S rRNA nuclease">
    <location>
        <begin position="1"/>
        <end position="142"/>
    </location>
</feature>
<reference key="1">
    <citation type="journal article" date="2006" name="J. Bacteriol.">
        <title>Complete genome sequence of the dehalorespiring bacterium Desulfitobacterium hafniense Y51 and comparison with Dehalococcoides ethenogenes 195.</title>
        <authorList>
            <person name="Nonaka H."/>
            <person name="Keresztes G."/>
            <person name="Shinoda Y."/>
            <person name="Ikenaga Y."/>
            <person name="Abe M."/>
            <person name="Naito K."/>
            <person name="Inatomi K."/>
            <person name="Furukawa K."/>
            <person name="Inui M."/>
            <person name="Yukawa H."/>
        </authorList>
    </citation>
    <scope>NUCLEOTIDE SEQUENCE [LARGE SCALE GENOMIC DNA]</scope>
    <source>
        <strain>Y51</strain>
    </source>
</reference>
<sequence>MRIMGLDFGERTIGVAVSDAMLLTAQGVKTIRRSPKELEELKTMLQDYEVDHIVLGYPKNMNGTLGPRAQATEEFAQILKEEFGLPVTLWDERLSTMGAQRSLLEADVSRAKRKQVIDKMAAVFILQGYLDYIRQKNGQNKE</sequence>
<proteinExistence type="inferred from homology"/>
<dbReference type="EC" id="3.1.-.-" evidence="1"/>
<dbReference type="EMBL" id="AP008230">
    <property type="protein sequence ID" value="BAE84207.1"/>
    <property type="molecule type" value="Genomic_DNA"/>
</dbReference>
<dbReference type="SMR" id="Q24UT5"/>
<dbReference type="STRING" id="138119.DSY2418"/>
<dbReference type="KEGG" id="dsy:DSY2418"/>
<dbReference type="eggNOG" id="COG0816">
    <property type="taxonomic scope" value="Bacteria"/>
</dbReference>
<dbReference type="HOGENOM" id="CLU_098240_2_0_9"/>
<dbReference type="Proteomes" id="UP000001946">
    <property type="component" value="Chromosome"/>
</dbReference>
<dbReference type="GO" id="GO:0005829">
    <property type="term" value="C:cytosol"/>
    <property type="evidence" value="ECO:0007669"/>
    <property type="project" value="TreeGrafter"/>
</dbReference>
<dbReference type="GO" id="GO:0004518">
    <property type="term" value="F:nuclease activity"/>
    <property type="evidence" value="ECO:0007669"/>
    <property type="project" value="UniProtKB-KW"/>
</dbReference>
<dbReference type="GO" id="GO:0000967">
    <property type="term" value="P:rRNA 5'-end processing"/>
    <property type="evidence" value="ECO:0007669"/>
    <property type="project" value="UniProtKB-UniRule"/>
</dbReference>
<dbReference type="CDD" id="cd16964">
    <property type="entry name" value="YqgF"/>
    <property type="match status" value="1"/>
</dbReference>
<dbReference type="Gene3D" id="3.30.420.140">
    <property type="entry name" value="YqgF/RNase H-like domain"/>
    <property type="match status" value="1"/>
</dbReference>
<dbReference type="HAMAP" id="MF_00651">
    <property type="entry name" value="Nuclease_YqgF"/>
    <property type="match status" value="1"/>
</dbReference>
<dbReference type="InterPro" id="IPR012337">
    <property type="entry name" value="RNaseH-like_sf"/>
</dbReference>
<dbReference type="InterPro" id="IPR005227">
    <property type="entry name" value="YqgF"/>
</dbReference>
<dbReference type="InterPro" id="IPR006641">
    <property type="entry name" value="YqgF/RNaseH-like_dom"/>
</dbReference>
<dbReference type="InterPro" id="IPR037027">
    <property type="entry name" value="YqgF/RNaseH-like_dom_sf"/>
</dbReference>
<dbReference type="NCBIfam" id="TIGR00250">
    <property type="entry name" value="RNAse_H_YqgF"/>
    <property type="match status" value="1"/>
</dbReference>
<dbReference type="PANTHER" id="PTHR33317">
    <property type="entry name" value="POLYNUCLEOTIDYL TRANSFERASE, RIBONUCLEASE H-LIKE SUPERFAMILY PROTEIN"/>
    <property type="match status" value="1"/>
</dbReference>
<dbReference type="PANTHER" id="PTHR33317:SF4">
    <property type="entry name" value="POLYNUCLEOTIDYL TRANSFERASE, RIBONUCLEASE H-LIKE SUPERFAMILY PROTEIN"/>
    <property type="match status" value="1"/>
</dbReference>
<dbReference type="Pfam" id="PF03652">
    <property type="entry name" value="RuvX"/>
    <property type="match status" value="1"/>
</dbReference>
<dbReference type="SMART" id="SM00732">
    <property type="entry name" value="YqgFc"/>
    <property type="match status" value="1"/>
</dbReference>
<dbReference type="SUPFAM" id="SSF53098">
    <property type="entry name" value="Ribonuclease H-like"/>
    <property type="match status" value="1"/>
</dbReference>
<organism>
    <name type="scientific">Desulfitobacterium hafniense (strain Y51)</name>
    <dbReference type="NCBI Taxonomy" id="138119"/>
    <lineage>
        <taxon>Bacteria</taxon>
        <taxon>Bacillati</taxon>
        <taxon>Bacillota</taxon>
        <taxon>Clostridia</taxon>
        <taxon>Eubacteriales</taxon>
        <taxon>Desulfitobacteriaceae</taxon>
        <taxon>Desulfitobacterium</taxon>
    </lineage>
</organism>
<name>YQGF_DESHY</name>
<evidence type="ECO:0000255" key="1">
    <source>
        <dbReference type="HAMAP-Rule" id="MF_00651"/>
    </source>
</evidence>
<protein>
    <recommendedName>
        <fullName evidence="1">Putative pre-16S rRNA nuclease</fullName>
        <ecNumber evidence="1">3.1.-.-</ecNumber>
    </recommendedName>
</protein>